<name>TIM17_YEAST</name>
<comment type="function">
    <text evidence="6">Essential component of the TIM23 complex, a complex that mediates the translocation of transit peptide-containing proteins across the mitochondrial inner membrane.</text>
</comment>
<comment type="subunit">
    <text evidence="4 5">Component of the TIM23 complex, at least composed of TIM23, TIM17, TIM50 and TIM21 (PubMed:15797382, PubMed:27265872). The complex interacts with the TIM44 component of the PAM complex (PubMed:15797382).</text>
</comment>
<comment type="interaction">
    <interactant intactId="EBI-9127">
        <id>P39515</id>
    </interactant>
    <interactant intactId="EBI-26019">
        <id>P42949</id>
        <label>PAM16</label>
    </interactant>
    <organismsDiffer>false</organismsDiffer>
    <experiments>4</experiments>
</comment>
<comment type="interaction">
    <interactant intactId="EBI-9127">
        <id>P39515</id>
    </interactant>
    <interactant intactId="EBI-31963">
        <id>Q07914</id>
        <label>PAM18</label>
    </interactant>
    <organismsDiffer>false</organismsDiffer>
    <experiments>3</experiments>
</comment>
<comment type="interaction">
    <interactant intactId="EBI-9127">
        <id>P39515</id>
    </interactant>
    <interactant intactId="EBI-9136">
        <id>P32897</id>
        <label>TIM23</label>
    </interactant>
    <organismsDiffer>false</organismsDiffer>
    <experiments>14</experiments>
</comment>
<comment type="interaction">
    <interactant intactId="EBI-9127">
        <id>P39515</id>
    </interactant>
    <interactant intactId="EBI-9141">
        <id>Q01852</id>
        <label>TIM44</label>
    </interactant>
    <organismsDiffer>false</organismsDiffer>
    <experiments>2</experiments>
</comment>
<comment type="subcellular location">
    <subcellularLocation>
        <location evidence="8">Mitochondrion inner membrane</location>
        <topology>Multi-pass membrane protein</topology>
    </subcellularLocation>
</comment>
<comment type="PTM">
    <text evidence="5">The disulfide bond is required for stabilization of the TIM23 complex.</text>
</comment>
<comment type="miscellaneous">
    <text evidence="2">Present with 1210 molecules/cell in log phase SD medium.</text>
</comment>
<comment type="similarity">
    <text evidence="7">Belongs to the Tim17/Tim22/Tim23 family.</text>
</comment>
<protein>
    <recommendedName>
        <fullName>Mitochondrial import inner membrane translocase subunit TIM17</fullName>
    </recommendedName>
    <alternativeName>
        <fullName>Mitochondrial inner membrane protein MIM17</fullName>
    </alternativeName>
    <alternativeName>
        <fullName>Mitochondrial protein import protein 2</fullName>
    </alternativeName>
</protein>
<reference key="1">
    <citation type="journal article" date="1994" name="FEBS Lett.">
        <title>Identification of the essential yeast protein MIM17, an integral mitochondrial inner membrane protein involved in protein import.</title>
        <authorList>
            <person name="Maarse A.C."/>
            <person name="Blom J."/>
            <person name="Keil P."/>
            <person name="Pfanner N."/>
            <person name="Meijer M."/>
        </authorList>
    </citation>
    <scope>NUCLEOTIDE SEQUENCE [GENOMIC DNA]</scope>
    <source>
        <strain>ATCC 77162</strain>
    </source>
</reference>
<reference key="2">
    <citation type="journal article" date="1994" name="Mol. Biol. Cell">
        <title>SMS1, a high-copy suppressor of the yeast mas6 mutant, encodes an essential inner membrane protein required for mitochondrial protein import.</title>
        <authorList>
            <person name="Ryan K.R."/>
            <person name="Menold M.M."/>
            <person name="Garrett S."/>
            <person name="Jensen R.E."/>
        </authorList>
    </citation>
    <scope>NUCLEOTIDE SEQUENCE [GENOMIC DNA]</scope>
</reference>
<reference key="3">
    <citation type="journal article" date="1996" name="Yeast">
        <title>Sequence analysis of a 40.7 kb segment from the left arm of yeast chromosome X reveals 14 known genes and 13 new open reading frames including homologues of genes clustered on the right arm of chromosome XI.</title>
        <authorList>
            <person name="Katsoulou C."/>
            <person name="Tzermia M."/>
            <person name="Tavernarakis N."/>
            <person name="Alexandraki D."/>
        </authorList>
    </citation>
    <scope>NUCLEOTIDE SEQUENCE [GENOMIC DNA]</scope>
    <source>
        <strain>ATCC 96604 / S288c / FY1679</strain>
    </source>
</reference>
<reference key="4">
    <citation type="journal article" date="1996" name="EMBO J.">
        <title>Complete nucleotide sequence of Saccharomyces cerevisiae chromosome X.</title>
        <authorList>
            <person name="Galibert F."/>
            <person name="Alexandraki D."/>
            <person name="Baur A."/>
            <person name="Boles E."/>
            <person name="Chalwatzis N."/>
            <person name="Chuat J.-C."/>
            <person name="Coster F."/>
            <person name="Cziepluch C."/>
            <person name="de Haan M."/>
            <person name="Domdey H."/>
            <person name="Durand P."/>
            <person name="Entian K.-D."/>
            <person name="Gatius M."/>
            <person name="Goffeau A."/>
            <person name="Grivell L.A."/>
            <person name="Hennemann A."/>
            <person name="Herbert C.J."/>
            <person name="Heumann K."/>
            <person name="Hilger F."/>
            <person name="Hollenberg C.P."/>
            <person name="Huang M.-E."/>
            <person name="Jacq C."/>
            <person name="Jauniaux J.-C."/>
            <person name="Katsoulou C."/>
            <person name="Kirchrath L."/>
            <person name="Kleine K."/>
            <person name="Kordes E."/>
            <person name="Koetter P."/>
            <person name="Liebl S."/>
            <person name="Louis E.J."/>
            <person name="Manus V."/>
            <person name="Mewes H.-W."/>
            <person name="Miosga T."/>
            <person name="Obermaier B."/>
            <person name="Perea J."/>
            <person name="Pohl T.M."/>
            <person name="Portetelle D."/>
            <person name="Pujol A."/>
            <person name="Purnelle B."/>
            <person name="Ramezani Rad M."/>
            <person name="Rasmussen S.W."/>
            <person name="Rose M."/>
            <person name="Rossau R."/>
            <person name="Schaaff-Gerstenschlaeger I."/>
            <person name="Smits P.H.M."/>
            <person name="Scarcez T."/>
            <person name="Soriano N."/>
            <person name="To Van D."/>
            <person name="Tzermia M."/>
            <person name="Van Broekhoven A."/>
            <person name="Vandenbol M."/>
            <person name="Wedler H."/>
            <person name="von Wettstein D."/>
            <person name="Wambutt R."/>
            <person name="Zagulski M."/>
            <person name="Zollner A."/>
            <person name="Karpfinger-Hartl L."/>
        </authorList>
    </citation>
    <scope>NUCLEOTIDE SEQUENCE [LARGE SCALE GENOMIC DNA]</scope>
    <source>
        <strain>ATCC 204508 / S288c</strain>
    </source>
</reference>
<reference key="5">
    <citation type="journal article" date="2014" name="G3 (Bethesda)">
        <title>The reference genome sequence of Saccharomyces cerevisiae: Then and now.</title>
        <authorList>
            <person name="Engel S.R."/>
            <person name="Dietrich F.S."/>
            <person name="Fisk D.G."/>
            <person name="Binkley G."/>
            <person name="Balakrishnan R."/>
            <person name="Costanzo M.C."/>
            <person name="Dwight S.S."/>
            <person name="Hitz B.C."/>
            <person name="Karra K."/>
            <person name="Nash R.S."/>
            <person name="Weng S."/>
            <person name="Wong E.D."/>
            <person name="Lloyd P."/>
            <person name="Skrzypek M.S."/>
            <person name="Miyasato S.R."/>
            <person name="Simison M."/>
            <person name="Cherry J.M."/>
        </authorList>
    </citation>
    <scope>GENOME REANNOTATION</scope>
    <source>
        <strain>ATCC 204508 / S288c</strain>
    </source>
</reference>
<reference key="6">
    <citation type="journal article" date="2007" name="Genome Res.">
        <title>Approaching a complete repository of sequence-verified protein-encoding clones for Saccharomyces cerevisiae.</title>
        <authorList>
            <person name="Hu Y."/>
            <person name="Rolfs A."/>
            <person name="Bhullar B."/>
            <person name="Murthy T.V.S."/>
            <person name="Zhu C."/>
            <person name="Berger M.F."/>
            <person name="Camargo A.A."/>
            <person name="Kelley F."/>
            <person name="McCarron S."/>
            <person name="Jepson D."/>
            <person name="Richardson A."/>
            <person name="Raphael J."/>
            <person name="Moreira D."/>
            <person name="Taycher E."/>
            <person name="Zuo D."/>
            <person name="Mohr S."/>
            <person name="Kane M.F."/>
            <person name="Williamson J."/>
            <person name="Simpson A.J.G."/>
            <person name="Bulyk M.L."/>
            <person name="Harlow E."/>
            <person name="Marsischky G."/>
            <person name="Kolodner R.D."/>
            <person name="LaBaer J."/>
        </authorList>
    </citation>
    <scope>NUCLEOTIDE SEQUENCE [GENOMIC DNA]</scope>
    <source>
        <strain>ATCC 204508 / S288c</strain>
    </source>
</reference>
<reference key="7">
    <citation type="journal article" date="1994" name="FEBS Lett.">
        <title>The polytopic mitochondrial inner membrane proteins MIM17 and MIM23 operate at the same preprotein import site.</title>
        <authorList>
            <person name="Kuebrich M."/>
            <person name="Keil P."/>
            <person name="Rassow J."/>
            <person name="Dekker P.J.T."/>
            <person name="Blom J."/>
            <person name="Meijer M."/>
            <person name="Pfanner N."/>
        </authorList>
    </citation>
    <scope>CHARACTERIZATION</scope>
    <scope>TOPOLOGY</scope>
</reference>
<reference key="8">
    <citation type="journal article" date="2003" name="Nature">
        <title>Global analysis of protein expression in yeast.</title>
        <authorList>
            <person name="Ghaemmaghami S."/>
            <person name="Huh W.-K."/>
            <person name="Bower K."/>
            <person name="Howson R.W."/>
            <person name="Belle A."/>
            <person name="Dephoure N."/>
            <person name="O'Shea E.K."/>
            <person name="Weissman J.S."/>
        </authorList>
    </citation>
    <scope>LEVEL OF PROTEIN EXPRESSION [LARGE SCALE ANALYSIS]</scope>
</reference>
<reference key="9">
    <citation type="journal article" date="2005" name="Cell">
        <title>Mitochondrial presequence translocase: switching between TOM tethering and motor recruitment involves Tim21 and Tim17.</title>
        <authorList>
            <person name="Chacinska A."/>
            <person name="Lind M."/>
            <person name="Frazier A.E."/>
            <person name="Dudek J."/>
            <person name="Meisinger C."/>
            <person name="Geissler A."/>
            <person name="Sickmann A."/>
            <person name="Meyer H.E."/>
            <person name="Truscott K.N."/>
            <person name="Guiard B."/>
            <person name="Pfanner N."/>
            <person name="Rehling P."/>
        </authorList>
    </citation>
    <scope>IDENTIFICATION IN THE TIM23 COMPLEX</scope>
</reference>
<reference key="10">
    <citation type="journal article" date="2005" name="J. Biol. Chem.">
        <title>Conserved N-terminal negative charges in the Tim17 subunit of the TIM23 translocase play a critical role in the import of preproteins into mitochondria.</title>
        <authorList>
            <person name="Meier S."/>
            <person name="Neupert W."/>
            <person name="Herrmann J.M."/>
        </authorList>
    </citation>
    <scope>MUTAGENESIS OF ASP-4 AND ASP-8</scope>
</reference>
<reference key="11">
    <citation type="journal article" date="2016" name="Sci. Rep.">
        <title>The presence of disulfide bonds reveals an evolutionarily conserved mechanism involved in mitochondrial protein translocase assembly.</title>
        <authorList>
            <person name="Wrobel L."/>
            <person name="Sokol A.M."/>
            <person name="Chojnacka M."/>
            <person name="Chacinska A."/>
        </authorList>
    </citation>
    <scope>DISULFIDE BOND</scope>
    <scope>SUBCELLULAR LOCATION</scope>
    <scope>TOPOLOGY</scope>
    <scope>IDENTIFICATION IN THE TIM23 COMPLEX</scope>
    <scope>MUTAGENESIS OF CYS-10; CYS-77; CYS-118 AND CYS-120</scope>
</reference>
<evidence type="ECO:0000255" key="1"/>
<evidence type="ECO:0000269" key="2">
    <source>
    </source>
</evidence>
<evidence type="ECO:0000269" key="3">
    <source>
    </source>
</evidence>
<evidence type="ECO:0000269" key="4">
    <source>
    </source>
</evidence>
<evidence type="ECO:0000269" key="5">
    <source>
    </source>
</evidence>
<evidence type="ECO:0000269" key="6">
    <source>
    </source>
</evidence>
<evidence type="ECO:0000305" key="7"/>
<evidence type="ECO:0000305" key="8">
    <source>
    </source>
</evidence>
<evidence type="ECO:0007829" key="9">
    <source>
        <dbReference type="PDB" id="8E1M"/>
    </source>
</evidence>
<keyword id="KW-0002">3D-structure</keyword>
<keyword id="KW-1015">Disulfide bond</keyword>
<keyword id="KW-0472">Membrane</keyword>
<keyword id="KW-0496">Mitochondrion</keyword>
<keyword id="KW-0999">Mitochondrion inner membrane</keyword>
<keyword id="KW-0653">Protein transport</keyword>
<keyword id="KW-1185">Reference proteome</keyword>
<keyword id="KW-0811">Translocation</keyword>
<keyword id="KW-0812">Transmembrane</keyword>
<keyword id="KW-1133">Transmembrane helix</keyword>
<keyword id="KW-0813">Transport</keyword>
<dbReference type="EMBL" id="X77796">
    <property type="protein sequence ID" value="CAA54823.1"/>
    <property type="molecule type" value="Genomic_DNA"/>
</dbReference>
<dbReference type="EMBL" id="S74018">
    <property type="protein sequence ID" value="AAB32164.1"/>
    <property type="molecule type" value="Genomic_DNA"/>
</dbReference>
<dbReference type="EMBL" id="X87371">
    <property type="protein sequence ID" value="CAA60812.1"/>
    <property type="molecule type" value="Genomic_DNA"/>
</dbReference>
<dbReference type="EMBL" id="Z49418">
    <property type="protein sequence ID" value="CAA89438.1"/>
    <property type="molecule type" value="Genomic_DNA"/>
</dbReference>
<dbReference type="EMBL" id="AY557852">
    <property type="protein sequence ID" value="AAS56178.1"/>
    <property type="molecule type" value="Genomic_DNA"/>
</dbReference>
<dbReference type="EMBL" id="BK006943">
    <property type="protein sequence ID" value="DAA08658.1"/>
    <property type="molecule type" value="Genomic_DNA"/>
</dbReference>
<dbReference type="PIR" id="S46257">
    <property type="entry name" value="S46257"/>
</dbReference>
<dbReference type="RefSeq" id="NP_012392.1">
    <property type="nucleotide sequence ID" value="NM_001181576.1"/>
</dbReference>
<dbReference type="PDB" id="8E1M">
    <property type="method" value="EM"/>
    <property type="resolution" value="2.90 A"/>
    <property type="chains" value="A=1-158"/>
</dbReference>
<dbReference type="PDBsum" id="8E1M"/>
<dbReference type="SMR" id="P39515"/>
<dbReference type="BioGRID" id="33615">
    <property type="interactions" value="43"/>
</dbReference>
<dbReference type="ComplexPortal" id="CPX-539">
    <property type="entry name" value="TIM23 mitochondrial inner membrane pre-sequence translocase complex, motor variant"/>
</dbReference>
<dbReference type="ComplexPortal" id="CPX-6127">
    <property type="entry name" value="TIM23 mitochondrial inner membrane pre-sequence translocase complex, sort variant"/>
</dbReference>
<dbReference type="DIP" id="DIP-2108N"/>
<dbReference type="FunCoup" id="P39515">
    <property type="interactions" value="1388"/>
</dbReference>
<dbReference type="IntAct" id="P39515">
    <property type="interactions" value="11"/>
</dbReference>
<dbReference type="MINT" id="P39515"/>
<dbReference type="STRING" id="4932.YJL143W"/>
<dbReference type="TCDB" id="3.A.8.1.1">
    <property type="family name" value="the mitochondrial protein translocase (mpt) family"/>
</dbReference>
<dbReference type="PaxDb" id="4932-YJL143W"/>
<dbReference type="PeptideAtlas" id="P39515"/>
<dbReference type="DNASU" id="853298"/>
<dbReference type="EnsemblFungi" id="YJL143W_mRNA">
    <property type="protein sequence ID" value="YJL143W"/>
    <property type="gene ID" value="YJL143W"/>
</dbReference>
<dbReference type="GeneID" id="853298"/>
<dbReference type="KEGG" id="sce:YJL143W"/>
<dbReference type="AGR" id="SGD:S000003679"/>
<dbReference type="SGD" id="S000003679">
    <property type="gene designation" value="TIM17"/>
</dbReference>
<dbReference type="VEuPathDB" id="FungiDB:YJL143W"/>
<dbReference type="eggNOG" id="KOG1652">
    <property type="taxonomic scope" value="Eukaryota"/>
</dbReference>
<dbReference type="GeneTree" id="ENSGT00390000017780"/>
<dbReference type="HOGENOM" id="CLU_087811_3_0_1"/>
<dbReference type="InParanoid" id="P39515"/>
<dbReference type="OMA" id="FDCTFQY"/>
<dbReference type="OrthoDB" id="2261329at2759"/>
<dbReference type="BioCyc" id="YEAST:G3O-31587-MONOMER"/>
<dbReference type="Reactome" id="R-SCE-1268020">
    <property type="pathway name" value="Mitochondrial protein import"/>
</dbReference>
<dbReference type="BioGRID-ORCS" id="853298">
    <property type="hits" value="7 hits in 10 CRISPR screens"/>
</dbReference>
<dbReference type="PRO" id="PR:P39515"/>
<dbReference type="Proteomes" id="UP000002311">
    <property type="component" value="Chromosome X"/>
</dbReference>
<dbReference type="RNAct" id="P39515">
    <property type="molecule type" value="protein"/>
</dbReference>
<dbReference type="GO" id="GO:0005743">
    <property type="term" value="C:mitochondrial inner membrane"/>
    <property type="evidence" value="ECO:0000304"/>
    <property type="project" value="Reactome"/>
</dbReference>
<dbReference type="GO" id="GO:0005758">
    <property type="term" value="C:mitochondrial intermembrane space"/>
    <property type="evidence" value="ECO:0000304"/>
    <property type="project" value="Reactome"/>
</dbReference>
<dbReference type="GO" id="GO:0005739">
    <property type="term" value="C:mitochondrion"/>
    <property type="evidence" value="ECO:0007005"/>
    <property type="project" value="SGD"/>
</dbReference>
<dbReference type="GO" id="GO:0005744">
    <property type="term" value="C:TIM23 mitochondrial import inner membrane translocase complex"/>
    <property type="evidence" value="ECO:0000314"/>
    <property type="project" value="SGD"/>
</dbReference>
<dbReference type="GO" id="GO:0008320">
    <property type="term" value="F:protein transmembrane transporter activity"/>
    <property type="evidence" value="ECO:0007669"/>
    <property type="project" value="InterPro"/>
</dbReference>
<dbReference type="GO" id="GO:0006886">
    <property type="term" value="P:intracellular protein transport"/>
    <property type="evidence" value="ECO:0000303"/>
    <property type="project" value="ComplexPortal"/>
</dbReference>
<dbReference type="GO" id="GO:0000002">
    <property type="term" value="P:mitochondrial genome maintenance"/>
    <property type="evidence" value="ECO:0000316"/>
    <property type="project" value="SGD"/>
</dbReference>
<dbReference type="GO" id="GO:0030150">
    <property type="term" value="P:protein import into mitochondrial matrix"/>
    <property type="evidence" value="ECO:0000315"/>
    <property type="project" value="SGD"/>
</dbReference>
<dbReference type="GO" id="GO:0045039">
    <property type="term" value="P:protein insertion into mitochondrial inner membrane"/>
    <property type="evidence" value="ECO:0000303"/>
    <property type="project" value="ComplexPortal"/>
</dbReference>
<dbReference type="InterPro" id="IPR005678">
    <property type="entry name" value="Tim17"/>
</dbReference>
<dbReference type="NCBIfam" id="TIGR00980">
    <property type="entry name" value="3a0801so1tim17"/>
    <property type="match status" value="1"/>
</dbReference>
<dbReference type="PANTHER" id="PTHR10485:SF0">
    <property type="entry name" value="AT05822P-RELATED"/>
    <property type="match status" value="1"/>
</dbReference>
<dbReference type="PANTHER" id="PTHR10485">
    <property type="entry name" value="MITOCHONDRIAL IMPORT INNER MEMBRANE TRANSLOCASE SUBUNIT TIM-17"/>
    <property type="match status" value="1"/>
</dbReference>
<dbReference type="Pfam" id="PF02466">
    <property type="entry name" value="Tim17"/>
    <property type="match status" value="1"/>
</dbReference>
<organism>
    <name type="scientific">Saccharomyces cerevisiae (strain ATCC 204508 / S288c)</name>
    <name type="common">Baker's yeast</name>
    <dbReference type="NCBI Taxonomy" id="559292"/>
    <lineage>
        <taxon>Eukaryota</taxon>
        <taxon>Fungi</taxon>
        <taxon>Dikarya</taxon>
        <taxon>Ascomycota</taxon>
        <taxon>Saccharomycotina</taxon>
        <taxon>Saccharomycetes</taxon>
        <taxon>Saccharomycetales</taxon>
        <taxon>Saccharomycetaceae</taxon>
        <taxon>Saccharomyces</taxon>
    </lineage>
</organism>
<feature type="chain" id="PRO_0000210296" description="Mitochondrial import inner membrane translocase subunit TIM17">
    <location>
        <begin position="1"/>
        <end position="158"/>
    </location>
</feature>
<feature type="topological domain" description="Mitochondrial intermembrane" evidence="8">
    <location>
        <begin position="1"/>
        <end position="11"/>
    </location>
</feature>
<feature type="transmembrane region" description="Helical" evidence="1">
    <location>
        <begin position="12"/>
        <end position="32"/>
    </location>
</feature>
<feature type="topological domain" description="Mitochondrial matrix" evidence="1">
    <location>
        <begin position="33"/>
        <end position="58"/>
    </location>
</feature>
<feature type="transmembrane region" description="Helical" evidence="1">
    <location>
        <begin position="59"/>
        <end position="75"/>
    </location>
</feature>
<feature type="topological domain" description="Mitochondrial intermembrane" evidence="8">
    <location>
        <begin position="76"/>
        <end position="87"/>
    </location>
</feature>
<feature type="transmembrane region" description="Helical" evidence="1">
    <location>
        <begin position="88"/>
        <end position="108"/>
    </location>
</feature>
<feature type="topological domain" description="Mitochondrial matrix" evidence="1">
    <location>
        <begin position="109"/>
        <end position="112"/>
    </location>
</feature>
<feature type="transmembrane region" description="Helical" evidence="1">
    <location>
        <begin position="113"/>
        <end position="133"/>
    </location>
</feature>
<feature type="topological domain" description="Mitochondrial intermembrane" evidence="1">
    <location>
        <begin position="134"/>
        <end position="158"/>
    </location>
</feature>
<feature type="disulfide bond" evidence="8">
    <location>
        <begin position="10"/>
        <end position="77"/>
    </location>
</feature>
<feature type="mutagenesis site" description="Induces abolition of mitochondrial import of transit peptide-containing proteins; when associated with K-8." evidence="3">
    <original>D</original>
    <variation>R</variation>
    <location>
        <position position="4"/>
    </location>
</feature>
<feature type="mutagenesis site" description="Induces abolition of mitochondrial import of transit peptide-containing proteins; when associated with K-4." evidence="3">
    <original>D</original>
    <variation>K</variation>
    <location>
        <position position="8"/>
    </location>
</feature>
<feature type="mutagenesis site" description="Abolishes disulfide bond, leading to destabilization of the TIM23 complex." evidence="5">
    <original>C</original>
    <variation>S</variation>
    <location>
        <position position="10"/>
    </location>
</feature>
<feature type="mutagenesis site" description="Abolishes disulfide bond, leading to destabilization of the TIM23 complex." evidence="5">
    <original>C</original>
    <variation>S</variation>
    <location>
        <position position="77"/>
    </location>
</feature>
<feature type="mutagenesis site" description="Does not affect oxidation state." evidence="5">
    <original>C</original>
    <variation>S</variation>
    <location>
        <position position="118"/>
    </location>
</feature>
<feature type="mutagenesis site" description="Does not affect oxidation state." evidence="5">
    <original>C</original>
    <variation>S</variation>
    <location>
        <position position="120"/>
    </location>
</feature>
<feature type="sequence conflict" description="In Ref. 2; AAB32164." evidence="7" ref="2">
    <original>H</original>
    <variation>T</variation>
    <location>
        <position position="33"/>
    </location>
</feature>
<feature type="helix" evidence="9">
    <location>
        <begin position="10"/>
        <end position="40"/>
    </location>
</feature>
<feature type="helix" evidence="9">
    <location>
        <begin position="43"/>
        <end position="45"/>
    </location>
</feature>
<feature type="helix" evidence="9">
    <location>
        <begin position="48"/>
        <end position="83"/>
    </location>
</feature>
<feature type="helix" evidence="9">
    <location>
        <begin position="89"/>
        <end position="101"/>
    </location>
</feature>
<feature type="helix" evidence="9">
    <location>
        <begin position="108"/>
        <end position="137"/>
    </location>
</feature>
<accession>P39515</accession>
<accession>D6VW42</accession>
<accession>Q02310</accession>
<gene>
    <name type="primary">TIM17</name>
    <name type="synonym">MIM17</name>
    <name type="synonym">MPI2</name>
    <name type="synonym">SMS1</name>
    <name type="ordered locus">YJL143W</name>
    <name type="ORF">J0648</name>
</gene>
<proteinExistence type="evidence at protein level"/>
<sequence length="158" mass="16584">MSADHSRDPCPIVILNDFGGAFAMGAIGGVVWHGIKGFRNSPLGERGSGAMSAIKARAPVLGGNFGVWGGLFSTFDCAVKAVRKREDPWNAIIAGFFTGGALAVRGGWRHTRNSSITCACLLGVIEGVGLMFQRYAAWQAKPMAPPLPEAPSSQPLQA</sequence>